<feature type="chain" id="PRO_0000314280" description="RNA polymerase II holoenzyme cyclin-like subunit">
    <location>
        <begin position="1"/>
        <end position="346"/>
    </location>
</feature>
<feature type="domain" description="Cyclin N-terminal">
    <location>
        <begin position="59"/>
        <end position="158"/>
    </location>
</feature>
<gene>
    <name type="primary">SSN8</name>
    <name type="ORF">PICST_54418</name>
</gene>
<keyword id="KW-0010">Activator</keyword>
<keyword id="KW-0195">Cyclin</keyword>
<keyword id="KW-0539">Nucleus</keyword>
<keyword id="KW-1185">Reference proteome</keyword>
<keyword id="KW-0678">Repressor</keyword>
<keyword id="KW-0804">Transcription</keyword>
<keyword id="KW-0805">Transcription regulation</keyword>
<sequence length="346" mass="40545">MSADFWCSSQRNKWQLSRQSLLEARRKVLLLERKMIQNGLIKDYPNIHYDFNMRIYLHNLLIKLGRRLNIRQVALATAEIYLNRFLTRVSLKEINVYLLVTTCLYVACKIEECPQHIRLIISEARNLWPEYIPHDVTKLAEFEFYLIEEMDSYLFLHHPYKSLIQIRDFLNENSAVFGFTLTDDELQNAWSLVNDSYITDLHLLLPPHIIAVASIYITIVLKKNLSAIRVNSSAVNSNGGPNSMMFNRNPDQNSMHIDDLMILANPSTPGSDLVNNLERTNFHDMKLDEETIKINKFMNFLDHSHINLDEVVEAMQDMINIYVQWNRYNEQGVKKALQVMLLNRQL</sequence>
<protein>
    <recommendedName>
        <fullName>RNA polymerase II holoenzyme cyclin-like subunit</fullName>
    </recommendedName>
</protein>
<proteinExistence type="inferred from homology"/>
<organism>
    <name type="scientific">Scheffersomyces stipitis (strain ATCC 58785 / CBS 6054 / NBRC 10063 / NRRL Y-11545)</name>
    <name type="common">Yeast</name>
    <name type="synonym">Pichia stipitis</name>
    <dbReference type="NCBI Taxonomy" id="322104"/>
    <lineage>
        <taxon>Eukaryota</taxon>
        <taxon>Fungi</taxon>
        <taxon>Dikarya</taxon>
        <taxon>Ascomycota</taxon>
        <taxon>Saccharomycotina</taxon>
        <taxon>Pichiomycetes</taxon>
        <taxon>Debaryomycetaceae</taxon>
        <taxon>Scheffersomyces</taxon>
    </lineage>
</organism>
<accession>A3LPX1</accession>
<evidence type="ECO:0000250" key="1"/>
<evidence type="ECO:0000305" key="2"/>
<dbReference type="EMBL" id="CP000496">
    <property type="protein sequence ID" value="ABN64572.2"/>
    <property type="molecule type" value="Genomic_DNA"/>
</dbReference>
<dbReference type="RefSeq" id="XP_001382601.2">
    <property type="nucleotide sequence ID" value="XM_001382564.1"/>
</dbReference>
<dbReference type="SMR" id="A3LPX1"/>
<dbReference type="FunCoup" id="A3LPX1">
    <property type="interactions" value="978"/>
</dbReference>
<dbReference type="STRING" id="322104.A3LPX1"/>
<dbReference type="GeneID" id="4836885"/>
<dbReference type="KEGG" id="pic:PICST_54418"/>
<dbReference type="eggNOG" id="KOG0794">
    <property type="taxonomic scope" value="Eukaryota"/>
</dbReference>
<dbReference type="HOGENOM" id="CLU_034754_2_1_1"/>
<dbReference type="InParanoid" id="A3LPX1"/>
<dbReference type="OMA" id="DDGPRYW"/>
<dbReference type="OrthoDB" id="10266018at2759"/>
<dbReference type="Proteomes" id="UP000002258">
    <property type="component" value="Chromosome 2"/>
</dbReference>
<dbReference type="GO" id="GO:1990508">
    <property type="term" value="C:CKM complex"/>
    <property type="evidence" value="ECO:0007669"/>
    <property type="project" value="EnsemblFungi"/>
</dbReference>
<dbReference type="GO" id="GO:0016592">
    <property type="term" value="C:mediator complex"/>
    <property type="evidence" value="ECO:0007669"/>
    <property type="project" value="EnsemblFungi"/>
</dbReference>
<dbReference type="GO" id="GO:0016538">
    <property type="term" value="F:cyclin-dependent protein serine/threonine kinase regulator activity"/>
    <property type="evidence" value="ECO:0007669"/>
    <property type="project" value="EnsemblFungi"/>
</dbReference>
<dbReference type="GO" id="GO:0000979">
    <property type="term" value="F:RNA polymerase II core promoter sequence-specific DNA binding"/>
    <property type="evidence" value="ECO:0007669"/>
    <property type="project" value="EnsemblFungi"/>
</dbReference>
<dbReference type="GO" id="GO:0034605">
    <property type="term" value="P:cellular response to heat"/>
    <property type="evidence" value="ECO:0007669"/>
    <property type="project" value="EnsemblFungi"/>
</dbReference>
<dbReference type="GO" id="GO:0051321">
    <property type="term" value="P:meiotic cell cycle"/>
    <property type="evidence" value="ECO:0007669"/>
    <property type="project" value="EnsemblFungi"/>
</dbReference>
<dbReference type="GO" id="GO:0000122">
    <property type="term" value="P:negative regulation of transcription by RNA polymerase II"/>
    <property type="evidence" value="ECO:0007669"/>
    <property type="project" value="EnsemblFungi"/>
</dbReference>
<dbReference type="GO" id="GO:0000411">
    <property type="term" value="P:positive regulation of transcription by galactose"/>
    <property type="evidence" value="ECO:0007669"/>
    <property type="project" value="EnsemblFungi"/>
</dbReference>
<dbReference type="GO" id="GO:0045944">
    <property type="term" value="P:positive regulation of transcription by RNA polymerase II"/>
    <property type="evidence" value="ECO:0007669"/>
    <property type="project" value="EnsemblFungi"/>
</dbReference>
<dbReference type="CDD" id="cd20513">
    <property type="entry name" value="CYCLIN_CCNC_rpt1"/>
    <property type="match status" value="1"/>
</dbReference>
<dbReference type="CDD" id="cd20546">
    <property type="entry name" value="CYCLIN_SpCG1C_ScCTK2-like_rpt2"/>
    <property type="match status" value="1"/>
</dbReference>
<dbReference type="FunFam" id="1.10.472.10:FF:000077">
    <property type="entry name" value="RNA polymerase II holoenzyme cyclin-like subunit"/>
    <property type="match status" value="1"/>
</dbReference>
<dbReference type="Gene3D" id="1.10.472.10">
    <property type="entry name" value="Cyclin-like"/>
    <property type="match status" value="2"/>
</dbReference>
<dbReference type="InterPro" id="IPR013763">
    <property type="entry name" value="Cyclin-like_dom"/>
</dbReference>
<dbReference type="InterPro" id="IPR036915">
    <property type="entry name" value="Cyclin-like_sf"/>
</dbReference>
<dbReference type="InterPro" id="IPR043198">
    <property type="entry name" value="Cyclin/Ssn8"/>
</dbReference>
<dbReference type="InterPro" id="IPR006671">
    <property type="entry name" value="Cyclin_N"/>
</dbReference>
<dbReference type="PANTHER" id="PTHR10026">
    <property type="entry name" value="CYCLIN"/>
    <property type="match status" value="1"/>
</dbReference>
<dbReference type="Pfam" id="PF00134">
    <property type="entry name" value="Cyclin_N"/>
    <property type="match status" value="1"/>
</dbReference>
<dbReference type="PIRSF" id="PIRSF028758">
    <property type="entry name" value="Cyclin, C/H/G types"/>
    <property type="match status" value="1"/>
</dbReference>
<dbReference type="SMART" id="SM00385">
    <property type="entry name" value="CYCLIN"/>
    <property type="match status" value="1"/>
</dbReference>
<dbReference type="SUPFAM" id="SSF47954">
    <property type="entry name" value="Cyclin-like"/>
    <property type="match status" value="2"/>
</dbReference>
<name>SSN8_PICST</name>
<reference key="1">
    <citation type="journal article" date="2007" name="Nat. Biotechnol.">
        <title>Genome sequence of the lignocellulose-bioconverting and xylose-fermenting yeast Pichia stipitis.</title>
        <authorList>
            <person name="Jeffries T.W."/>
            <person name="Grigoriev I.V."/>
            <person name="Grimwood J."/>
            <person name="Laplaza J.M."/>
            <person name="Aerts A."/>
            <person name="Salamov A."/>
            <person name="Schmutz J."/>
            <person name="Lindquist E."/>
            <person name="Dehal P."/>
            <person name="Shapiro H."/>
            <person name="Jin Y.-S."/>
            <person name="Passoth V."/>
            <person name="Richardson P.M."/>
        </authorList>
    </citation>
    <scope>NUCLEOTIDE SEQUENCE [LARGE SCALE GENOMIC DNA]</scope>
    <source>
        <strain>ATCC 58785 / CBS 6054 / NBRC 10063 / NRRL Y-11545</strain>
    </source>
</reference>
<comment type="function">
    <text evidence="1">Component of the SRB8-11 complex. The SRB8-11 complex is a regulatory module of the Mediator complex which is itself involved in regulation of basal and activated RNA polymerase II-dependent transcription. The SRB8-11 complex may be involved in the transcriptional repression of a subset of genes regulated by Mediator. It may inhibit the association of the Mediator complex with RNA polymerase II to form the holoenzyme complex. The SRB8-11 complex phosphorylates the C-terminal domain (CTD) of the largest subunit of RNA polymerase II (By similarity).</text>
</comment>
<comment type="subunit">
    <text evidence="1">Component of the SRB8-11 complex, a regulatory module of the Mediator complex.</text>
</comment>
<comment type="subcellular location">
    <subcellularLocation>
        <location evidence="2">Nucleus</location>
    </subcellularLocation>
</comment>
<comment type="similarity">
    <text evidence="2">Belongs to the cyclin family. Cyclin C subfamily.</text>
</comment>